<accession>B7USW8</accession>
<organism>
    <name type="scientific">Escherichia coli O127:H6 (strain E2348/69 / EPEC)</name>
    <dbReference type="NCBI Taxonomy" id="574521"/>
    <lineage>
        <taxon>Bacteria</taxon>
        <taxon>Pseudomonadati</taxon>
        <taxon>Pseudomonadota</taxon>
        <taxon>Gammaproteobacteria</taxon>
        <taxon>Enterobacterales</taxon>
        <taxon>Enterobacteriaceae</taxon>
        <taxon>Escherichia</taxon>
    </lineage>
</organism>
<feature type="chain" id="PRO_1000191304" description="Mannosyl-3-phosphoglycerate phosphatase">
    <location>
        <begin position="1"/>
        <end position="271"/>
    </location>
</feature>
<feature type="active site" description="Nucleophile" evidence="1">
    <location>
        <position position="13"/>
    </location>
</feature>
<feature type="binding site" evidence="1">
    <location>
        <position position="13"/>
    </location>
    <ligand>
        <name>Mg(2+)</name>
        <dbReference type="ChEBI" id="CHEBI:18420"/>
    </ligand>
</feature>
<feature type="binding site" evidence="1">
    <location>
        <position position="15"/>
    </location>
    <ligand>
        <name>Mg(2+)</name>
        <dbReference type="ChEBI" id="CHEBI:18420"/>
    </ligand>
</feature>
<feature type="binding site" evidence="1">
    <location>
        <position position="214"/>
    </location>
    <ligand>
        <name>Mg(2+)</name>
        <dbReference type="ChEBI" id="CHEBI:18420"/>
    </ligand>
</feature>
<dbReference type="EC" id="3.1.3.70" evidence="1"/>
<dbReference type="EMBL" id="FM180568">
    <property type="protein sequence ID" value="CAS09616.1"/>
    <property type="molecule type" value="Genomic_DNA"/>
</dbReference>
<dbReference type="RefSeq" id="WP_000491487.1">
    <property type="nucleotide sequence ID" value="NC_011601.1"/>
</dbReference>
<dbReference type="SMR" id="B7USW8"/>
<dbReference type="KEGG" id="ecg:E2348C_2068"/>
<dbReference type="HOGENOM" id="CLU_063016_1_0_6"/>
<dbReference type="Proteomes" id="UP000008205">
    <property type="component" value="Chromosome"/>
</dbReference>
<dbReference type="GO" id="GO:0005829">
    <property type="term" value="C:cytosol"/>
    <property type="evidence" value="ECO:0007669"/>
    <property type="project" value="TreeGrafter"/>
</dbReference>
<dbReference type="GO" id="GO:0000287">
    <property type="term" value="F:magnesium ion binding"/>
    <property type="evidence" value="ECO:0007669"/>
    <property type="project" value="TreeGrafter"/>
</dbReference>
<dbReference type="GO" id="GO:0050531">
    <property type="term" value="F:mannosyl-3-phosphoglycerate phosphatase activity"/>
    <property type="evidence" value="ECO:0007669"/>
    <property type="project" value="UniProtKB-UniRule"/>
</dbReference>
<dbReference type="GO" id="GO:0051479">
    <property type="term" value="P:mannosylglycerate biosynthetic process"/>
    <property type="evidence" value="ECO:0007669"/>
    <property type="project" value="InterPro"/>
</dbReference>
<dbReference type="CDD" id="cd07507">
    <property type="entry name" value="HAD_Pase"/>
    <property type="match status" value="1"/>
</dbReference>
<dbReference type="Gene3D" id="3.40.50.1000">
    <property type="entry name" value="HAD superfamily/HAD-like"/>
    <property type="match status" value="1"/>
</dbReference>
<dbReference type="Gene3D" id="3.30.980.20">
    <property type="entry name" value="Putative mannosyl-3-phosphoglycerate phosphatase, domain 2"/>
    <property type="match status" value="1"/>
</dbReference>
<dbReference type="HAMAP" id="MF_00617">
    <property type="entry name" value="MPGP_rel"/>
    <property type="match status" value="1"/>
</dbReference>
<dbReference type="InterPro" id="IPR036412">
    <property type="entry name" value="HAD-like_sf"/>
</dbReference>
<dbReference type="InterPro" id="IPR006381">
    <property type="entry name" value="HAD-SF-IIB-MPGP"/>
</dbReference>
<dbReference type="InterPro" id="IPR006379">
    <property type="entry name" value="HAD-SF_hydro_IIB"/>
</dbReference>
<dbReference type="InterPro" id="IPR023214">
    <property type="entry name" value="HAD_sf"/>
</dbReference>
<dbReference type="InterPro" id="IPR012815">
    <property type="entry name" value="MPG_Pase"/>
</dbReference>
<dbReference type="NCBIfam" id="TIGR01484">
    <property type="entry name" value="HAD-SF-IIB"/>
    <property type="match status" value="1"/>
</dbReference>
<dbReference type="NCBIfam" id="TIGR01486">
    <property type="entry name" value="HAD-SF-IIB-MPGP"/>
    <property type="match status" value="1"/>
</dbReference>
<dbReference type="NCBIfam" id="TIGR02463">
    <property type="entry name" value="MPGP_rel"/>
    <property type="match status" value="1"/>
</dbReference>
<dbReference type="NCBIfam" id="NF002976">
    <property type="entry name" value="PRK03669.1"/>
    <property type="match status" value="1"/>
</dbReference>
<dbReference type="PANTHER" id="PTHR10000:SF8">
    <property type="entry name" value="HAD SUPERFAMILY HYDROLASE-LIKE, TYPE 3"/>
    <property type="match status" value="1"/>
</dbReference>
<dbReference type="PANTHER" id="PTHR10000">
    <property type="entry name" value="PHOSPHOSERINE PHOSPHATASE"/>
    <property type="match status" value="1"/>
</dbReference>
<dbReference type="Pfam" id="PF08282">
    <property type="entry name" value="Hydrolase_3"/>
    <property type="match status" value="1"/>
</dbReference>
<dbReference type="SFLD" id="SFLDG01142">
    <property type="entry name" value="C2.B.2:_Mannosyl-3-phosphoglyc"/>
    <property type="match status" value="1"/>
</dbReference>
<dbReference type="SFLD" id="SFLDG01140">
    <property type="entry name" value="C2.B:_Phosphomannomutase_and_P"/>
    <property type="match status" value="1"/>
</dbReference>
<dbReference type="SUPFAM" id="SSF56784">
    <property type="entry name" value="HAD-like"/>
    <property type="match status" value="1"/>
</dbReference>
<reference key="1">
    <citation type="journal article" date="2009" name="J. Bacteriol.">
        <title>Complete genome sequence and comparative genome analysis of enteropathogenic Escherichia coli O127:H6 strain E2348/69.</title>
        <authorList>
            <person name="Iguchi A."/>
            <person name="Thomson N.R."/>
            <person name="Ogura Y."/>
            <person name="Saunders D."/>
            <person name="Ooka T."/>
            <person name="Henderson I.R."/>
            <person name="Harris D."/>
            <person name="Asadulghani M."/>
            <person name="Kurokawa K."/>
            <person name="Dean P."/>
            <person name="Kenny B."/>
            <person name="Quail M.A."/>
            <person name="Thurston S."/>
            <person name="Dougan G."/>
            <person name="Hayashi T."/>
            <person name="Parkhill J."/>
            <person name="Frankel G."/>
        </authorList>
    </citation>
    <scope>NUCLEOTIDE SEQUENCE [LARGE SCALE GENOMIC DNA]</scope>
    <source>
        <strain>E2348/69 / EPEC</strain>
    </source>
</reference>
<keyword id="KW-0963">Cytoplasm</keyword>
<keyword id="KW-0378">Hydrolase</keyword>
<keyword id="KW-0460">Magnesium</keyword>
<keyword id="KW-0479">Metal-binding</keyword>
<keyword id="KW-1185">Reference proteome</keyword>
<evidence type="ECO:0000255" key="1">
    <source>
        <dbReference type="HAMAP-Rule" id="MF_00617"/>
    </source>
</evidence>
<sequence>MFSIQQPLLVFSDLDGTLLDSHSYDWQPAAPWLSRLHEANVPVILCSSKTSAEMLYLQKMLGLQGLPLIAENGAVIQLAEQWQNIDGFPRIISGISHSEICQVLNTLREKEHFKFTTFDDVDDATIAEWTGLSRSQAALTQLHEASVTLIWRDSDEHMAQFIARLNELGLQFMQGARFWHVLDASAGKDQAANWIIATYQQLSGRRPTTLGLGDGPNDAPLLEVMDYAVIVKGLNREGVHLHDEDPARVWRTQREGPEGWREGLDHFFSAR</sequence>
<proteinExistence type="inferred from homology"/>
<gene>
    <name type="ordered locus">E2348C_2068</name>
</gene>
<comment type="catalytic activity">
    <reaction evidence="1">
        <text>2-O-(alpha-D-mannosyl)-3-phosphoglycerate + H2O = (2R)-2-O-(alpha-D-mannosyl)-glycerate + phosphate</text>
        <dbReference type="Rhea" id="RHEA:19309"/>
        <dbReference type="ChEBI" id="CHEBI:15377"/>
        <dbReference type="ChEBI" id="CHEBI:43474"/>
        <dbReference type="ChEBI" id="CHEBI:57541"/>
        <dbReference type="ChEBI" id="CHEBI:57744"/>
        <dbReference type="EC" id="3.1.3.70"/>
    </reaction>
</comment>
<comment type="cofactor">
    <cofactor evidence="1">
        <name>Mg(2+)</name>
        <dbReference type="ChEBI" id="CHEBI:18420"/>
    </cofactor>
</comment>
<comment type="subcellular location">
    <subcellularLocation>
        <location evidence="1">Cytoplasm</location>
    </subcellularLocation>
</comment>
<comment type="similarity">
    <text evidence="1">Belongs to the HAD-like hydrolase superfamily. MPGP family.</text>
</comment>
<name>MPGP_ECO27</name>
<protein>
    <recommendedName>
        <fullName evidence="1">Mannosyl-3-phosphoglycerate phosphatase</fullName>
        <shortName evidence="1">MPGP</shortName>
        <ecNumber evidence="1">3.1.3.70</ecNumber>
    </recommendedName>
</protein>